<accession>Q8WKF2</accession>
<name>CY550_PYRYE</name>
<dbReference type="EMBL" id="AB046176">
    <property type="protein sequence ID" value="BAB82987.1"/>
    <property type="molecule type" value="Genomic_DNA"/>
</dbReference>
<dbReference type="EMBL" id="AP006715">
    <property type="protein sequence ID" value="BAE92323.1"/>
    <property type="molecule type" value="Genomic_DNA"/>
</dbReference>
<dbReference type="RefSeq" id="YP_536880.1">
    <property type="nucleotide sequence ID" value="NC_007932.1"/>
</dbReference>
<dbReference type="SMR" id="Q8WKF2"/>
<dbReference type="GeneID" id="3978789"/>
<dbReference type="GO" id="GO:0009535">
    <property type="term" value="C:chloroplast thylakoid membrane"/>
    <property type="evidence" value="ECO:0007669"/>
    <property type="project" value="UniProtKB-SubCell"/>
</dbReference>
<dbReference type="GO" id="GO:0009523">
    <property type="term" value="C:photosystem II"/>
    <property type="evidence" value="ECO:0007669"/>
    <property type="project" value="UniProtKB-KW"/>
</dbReference>
<dbReference type="GO" id="GO:0009055">
    <property type="term" value="F:electron transfer activity"/>
    <property type="evidence" value="ECO:0007669"/>
    <property type="project" value="InterPro"/>
</dbReference>
<dbReference type="GO" id="GO:0020037">
    <property type="term" value="F:heme binding"/>
    <property type="evidence" value="ECO:0007669"/>
    <property type="project" value="InterPro"/>
</dbReference>
<dbReference type="GO" id="GO:0005506">
    <property type="term" value="F:iron ion binding"/>
    <property type="evidence" value="ECO:0007669"/>
    <property type="project" value="InterPro"/>
</dbReference>
<dbReference type="GO" id="GO:0019684">
    <property type="term" value="P:photosynthesis, light reaction"/>
    <property type="evidence" value="ECO:0007669"/>
    <property type="project" value="UniProtKB-UniRule"/>
</dbReference>
<dbReference type="GO" id="GO:0022904">
    <property type="term" value="P:respiratory electron transport chain"/>
    <property type="evidence" value="ECO:0007669"/>
    <property type="project" value="InterPro"/>
</dbReference>
<dbReference type="Gene3D" id="1.10.760.10">
    <property type="entry name" value="Cytochrome c-like domain"/>
    <property type="match status" value="1"/>
</dbReference>
<dbReference type="HAMAP" id="MF_01378">
    <property type="entry name" value="PSII_Cyt550"/>
    <property type="match status" value="1"/>
</dbReference>
<dbReference type="InterPro" id="IPR009056">
    <property type="entry name" value="Cyt_c-like_dom"/>
</dbReference>
<dbReference type="InterPro" id="IPR036909">
    <property type="entry name" value="Cyt_c-like_dom_sf"/>
</dbReference>
<dbReference type="InterPro" id="IPR029490">
    <property type="entry name" value="Cytochrom_C550"/>
</dbReference>
<dbReference type="InterPro" id="IPR017851">
    <property type="entry name" value="PsbV_cyt_c550"/>
</dbReference>
<dbReference type="InterPro" id="IPR016003">
    <property type="entry name" value="PsbV_cyt_c550-like"/>
</dbReference>
<dbReference type="NCBIfam" id="TIGR03045">
    <property type="entry name" value="PS_II_C550"/>
    <property type="match status" value="1"/>
</dbReference>
<dbReference type="Pfam" id="PF14495">
    <property type="entry name" value="Cytochrom_C550"/>
    <property type="match status" value="1"/>
</dbReference>
<dbReference type="PIRSF" id="PIRSF005890">
    <property type="entry name" value="Phot_II_cyt_c550"/>
    <property type="match status" value="1"/>
</dbReference>
<dbReference type="SUPFAM" id="SSF46626">
    <property type="entry name" value="Cytochrome c"/>
    <property type="match status" value="1"/>
</dbReference>
<dbReference type="PROSITE" id="PS51007">
    <property type="entry name" value="CYTC"/>
    <property type="match status" value="1"/>
</dbReference>
<proteinExistence type="inferred from homology"/>
<comment type="function">
    <text evidence="2">One of the extrinsic, lumenal subunits of photosystem II (PSII). PSII is a light-driven water plastoquinone oxidoreductase, using light energy to abstract electrons from H(2)O, generating a proton gradient subsequently used for ATP formation. The extrinsic proteins stabilize the structure of photosystem II oxygen-evolving complex (OEC), the ion environment of oxygen evolution and protect the OEC against heat-induced inactivation.</text>
</comment>
<comment type="cofactor">
    <cofactor evidence="2">
        <name>heme c</name>
        <dbReference type="ChEBI" id="CHEBI:61717"/>
    </cofactor>
    <text evidence="2">Binds 1 heme c group covalently per subunit.</text>
</comment>
<comment type="subunit">
    <text evidence="1">PSII is composed of 1 copy each of membrane proteins PsbA, PsbB, PsbC, PsbD, PsbE, PsbF, PsbH, PsbI, PsbJ, PsbK, PsbL, PsbM, PsbT, PsbY, PsbZ, Psb30/Ycf12, at least 3 peripheral proteins of the oxygen-evolving complex and a large number of cofactors. It forms dimeric complexes. The extrinsic subunits in red algae are PsbO (OEC33), PsbQ', cytochrome c-550 and PsbU.</text>
</comment>
<comment type="subcellular location">
    <subcellularLocation>
        <location evidence="2">Plastid</location>
        <location evidence="2">Chloroplast thylakoid membrane</location>
        <topology evidence="2">Peripheral membrane protein</topology>
        <orientation evidence="2">Lumenal side</orientation>
    </subcellularLocation>
    <text evidence="2">Associated with photosystem II at the lumenal side of the thylakoid membrane.</text>
</comment>
<comment type="similarity">
    <text evidence="2">Belongs to the cytochrome c family. PsbV subfamily.</text>
</comment>
<organism>
    <name type="scientific">Pyropia yezoensis</name>
    <name type="common">Susabi-nori</name>
    <name type="synonym">Porphyra yezoensis</name>
    <dbReference type="NCBI Taxonomy" id="2788"/>
    <lineage>
        <taxon>Eukaryota</taxon>
        <taxon>Rhodophyta</taxon>
        <taxon>Bangiophyceae</taxon>
        <taxon>Bangiales</taxon>
        <taxon>Bangiaceae</taxon>
        <taxon>Pyropia</taxon>
    </lineage>
</organism>
<reference key="1">
    <citation type="submission" date="2000-07" db="EMBL/GenBank/DDBJ databases">
        <title>Red alga, Porphyra yezoensis, cytochrome c550.</title>
        <authorList>
            <person name="Oku T."/>
        </authorList>
    </citation>
    <scope>NUCLEOTIDE SEQUENCE [GENOMIC DNA]</scope>
</reference>
<reference key="2">
    <citation type="submission" date="2003-11" db="EMBL/GenBank/DDBJ databases">
        <title>Whole genome sequence of Porphyra yezoensis chloroplast.</title>
        <authorList>
            <person name="Kunimoto M."/>
            <person name="Morishima K."/>
            <person name="Yoshikawa M."/>
            <person name="Fukuda S."/>
            <person name="Kobayashi T."/>
            <person name="Kobayashi M."/>
            <person name="Okazaki T."/>
            <person name="Ohara I."/>
            <person name="Nakayama I."/>
        </authorList>
    </citation>
    <scope>NUCLEOTIDE SEQUENCE [LARGE SCALE GENOMIC DNA]</scope>
    <source>
        <strain>U-51</strain>
    </source>
</reference>
<protein>
    <recommendedName>
        <fullName evidence="2">Photosystem II extrinsic protein V</fullName>
        <shortName evidence="2">PsbV</shortName>
    </recommendedName>
    <alternativeName>
        <fullName evidence="2">Cytochrome c-550</fullName>
    </alternativeName>
    <alternativeName>
        <fullName evidence="2">Cytochrome c550</fullName>
    </alternativeName>
</protein>
<gene>
    <name evidence="2" type="primary">psbV</name>
</gene>
<keyword id="KW-0150">Chloroplast</keyword>
<keyword id="KW-0249">Electron transport</keyword>
<keyword id="KW-0349">Heme</keyword>
<keyword id="KW-0408">Iron</keyword>
<keyword id="KW-0472">Membrane</keyword>
<keyword id="KW-0479">Metal-binding</keyword>
<keyword id="KW-0602">Photosynthesis</keyword>
<keyword id="KW-0604">Photosystem II</keyword>
<keyword id="KW-0934">Plastid</keyword>
<keyword id="KW-0732">Signal</keyword>
<keyword id="KW-0793">Thylakoid</keyword>
<keyword id="KW-0813">Transport</keyword>
<sequence length="163" mass="17871">MLKRSSWLAALLGLLTVVSTSTHTYAIELDEATRTVPLESSGRTVILTPEQVKRGKRLFNNSCAICHNGGITKTNPNIGLDPESLGLATPQRDTIEGLVDYMKDPTSYDGAESIAELHPSIKSAEIFPKMRNLTDEDLFTIAGHILLQPKIVSEKWGGGKIYY</sequence>
<evidence type="ECO:0000250" key="1">
    <source>
        <dbReference type="UniProtKB" id="Q76FB0"/>
    </source>
</evidence>
<evidence type="ECO:0000255" key="2">
    <source>
        <dbReference type="HAMAP-Rule" id="MF_01378"/>
    </source>
</evidence>
<feature type="signal peptide" evidence="2">
    <location>
        <begin position="1"/>
        <end position="26"/>
    </location>
</feature>
<feature type="chain" id="PRO_0000277303" description="Photosystem II extrinsic protein V">
    <location>
        <begin position="27"/>
        <end position="163"/>
    </location>
</feature>
<feature type="binding site" description="covalent" evidence="2">
    <location>
        <position position="63"/>
    </location>
    <ligand>
        <name>heme c</name>
        <dbReference type="ChEBI" id="CHEBI:61717"/>
    </ligand>
</feature>
<feature type="binding site" description="covalent" evidence="2">
    <location>
        <position position="66"/>
    </location>
    <ligand>
        <name>heme c</name>
        <dbReference type="ChEBI" id="CHEBI:61717"/>
    </ligand>
</feature>
<feature type="binding site" description="axial binding residue" evidence="2">
    <location>
        <position position="67"/>
    </location>
    <ligand>
        <name>heme c</name>
        <dbReference type="ChEBI" id="CHEBI:61717"/>
    </ligand>
    <ligandPart>
        <name>Fe</name>
        <dbReference type="ChEBI" id="CHEBI:18248"/>
    </ligandPart>
</feature>
<feature type="binding site" description="axial binding residue" evidence="2">
    <location>
        <position position="118"/>
    </location>
    <ligand>
        <name>heme c</name>
        <dbReference type="ChEBI" id="CHEBI:61717"/>
    </ligand>
    <ligandPart>
        <name>Fe</name>
        <dbReference type="ChEBI" id="CHEBI:18248"/>
    </ligandPart>
</feature>
<geneLocation type="chloroplast"/>